<sequence>AFNLRNRNFLKLLDFTPREIQYMIDLAIDL</sequence>
<organism>
    <name type="scientific">Aeromonas caviae</name>
    <name type="common">Aeromonas punctata</name>
    <dbReference type="NCBI Taxonomy" id="648"/>
    <lineage>
        <taxon>Bacteria</taxon>
        <taxon>Pseudomonadati</taxon>
        <taxon>Pseudomonadota</taxon>
        <taxon>Gammaproteobacteria</taxon>
        <taxon>Aeromonadales</taxon>
        <taxon>Aeromonadaceae</taxon>
        <taxon>Aeromonas</taxon>
    </lineage>
</organism>
<evidence type="ECO:0000305" key="1"/>
<proteinExistence type="evidence at protein level"/>
<accession>P11726</accession>
<protein>
    <recommendedName>
        <fullName>Ornithine carbamoyltransferase, catabolic</fullName>
        <shortName>OTCase</shortName>
        <ecNumber>2.1.3.3</ecNumber>
    </recommendedName>
</protein>
<name>OTCC_AERCA</name>
<comment type="catalytic activity">
    <reaction>
        <text>carbamoyl phosphate + L-ornithine = L-citrulline + phosphate + H(+)</text>
        <dbReference type="Rhea" id="RHEA:19513"/>
        <dbReference type="ChEBI" id="CHEBI:15378"/>
        <dbReference type="ChEBI" id="CHEBI:43474"/>
        <dbReference type="ChEBI" id="CHEBI:46911"/>
        <dbReference type="ChEBI" id="CHEBI:57743"/>
        <dbReference type="ChEBI" id="CHEBI:58228"/>
        <dbReference type="EC" id="2.1.3.3"/>
    </reaction>
</comment>
<comment type="pathway">
    <text>Amino-acid degradation; L-arginine degradation via ADI pathway; carbamoyl phosphate from L-arginine: step 2/2.</text>
</comment>
<comment type="subcellular location">
    <subcellularLocation>
        <location evidence="1">Cytoplasm</location>
    </subcellularLocation>
</comment>
<comment type="similarity">
    <text evidence="1">Belongs to the aspartate/ornithine carbamoyltransferase superfamily. OTCase family.</text>
</comment>
<gene>
    <name type="primary">arcB</name>
</gene>
<keyword id="KW-0056">Arginine metabolism</keyword>
<keyword id="KW-0963">Cytoplasm</keyword>
<keyword id="KW-0903">Direct protein sequencing</keyword>
<keyword id="KW-0808">Transferase</keyword>
<dbReference type="EC" id="2.1.3.3"/>
<dbReference type="SMR" id="P11726"/>
<dbReference type="UniPathway" id="UPA00254">
    <property type="reaction ID" value="UER00365"/>
</dbReference>
<dbReference type="GO" id="GO:0005737">
    <property type="term" value="C:cytoplasm"/>
    <property type="evidence" value="ECO:0007669"/>
    <property type="project" value="UniProtKB-SubCell"/>
</dbReference>
<dbReference type="GO" id="GO:0016597">
    <property type="term" value="F:amino acid binding"/>
    <property type="evidence" value="ECO:0007669"/>
    <property type="project" value="InterPro"/>
</dbReference>
<dbReference type="GO" id="GO:0004585">
    <property type="term" value="F:ornithine carbamoyltransferase activity"/>
    <property type="evidence" value="ECO:0007669"/>
    <property type="project" value="UniProtKB-EC"/>
</dbReference>
<dbReference type="GO" id="GO:0019547">
    <property type="term" value="P:arginine catabolic process to ornithine"/>
    <property type="evidence" value="ECO:0007669"/>
    <property type="project" value="UniProtKB-UniPathway"/>
</dbReference>
<dbReference type="Gene3D" id="3.40.50.1370">
    <property type="entry name" value="Aspartate/ornithine carbamoyltransferase"/>
    <property type="match status" value="1"/>
</dbReference>
<dbReference type="InterPro" id="IPR036901">
    <property type="entry name" value="Asp/Orn_carbamoylTrfase_sf"/>
</dbReference>
<reference key="1">
    <citation type="journal article" date="1985" name="J. Bacteriol.">
        <title>Immunological and structural relatedness of catabolic ornithine carbamoyltransferases and the anabolic enzymes of enterobacteria.</title>
        <authorList>
            <person name="Falmagne P."/>
            <person name="Portetelle D."/>
            <person name="Stalon V."/>
        </authorList>
    </citation>
    <scope>PROTEIN SEQUENCE</scope>
    <source>
        <strain>NCIMB 9232 / CDC 2030-53 / LMG 3742 / RH 1</strain>
    </source>
</reference>
<feature type="chain" id="PRO_0000112871" description="Ornithine carbamoyltransferase, catabolic">
    <location>
        <begin position="1"/>
        <end position="30" status="greater than"/>
    </location>
</feature>
<feature type="non-terminal residue">
    <location>
        <position position="30"/>
    </location>
</feature>